<keyword id="KW-0963">Cytoplasm</keyword>
<keyword id="KW-0255">Endonuclease</keyword>
<keyword id="KW-0378">Hydrolase</keyword>
<keyword id="KW-0479">Metal-binding</keyword>
<keyword id="KW-0540">Nuclease</keyword>
<keyword id="KW-0690">Ribosome biogenesis</keyword>
<keyword id="KW-0698">rRNA processing</keyword>
<keyword id="KW-0862">Zinc</keyword>
<accession>Q4ZN95</accession>
<proteinExistence type="inferred from homology"/>
<dbReference type="EC" id="3.1.-.-" evidence="1"/>
<dbReference type="EMBL" id="CP000075">
    <property type="protein sequence ID" value="AAY39377.1"/>
    <property type="molecule type" value="Genomic_DNA"/>
</dbReference>
<dbReference type="RefSeq" id="WP_003399800.1">
    <property type="nucleotide sequence ID" value="NC_007005.1"/>
</dbReference>
<dbReference type="RefSeq" id="YP_237415.1">
    <property type="nucleotide sequence ID" value="NC_007005.1"/>
</dbReference>
<dbReference type="SMR" id="Q4ZN95"/>
<dbReference type="STRING" id="205918.Psyr_4347"/>
<dbReference type="KEGG" id="psb:Psyr_4347"/>
<dbReference type="PATRIC" id="fig|205918.7.peg.4487"/>
<dbReference type="eggNOG" id="COG0319">
    <property type="taxonomic scope" value="Bacteria"/>
</dbReference>
<dbReference type="HOGENOM" id="CLU_106710_0_1_6"/>
<dbReference type="OrthoDB" id="9807740at2"/>
<dbReference type="Proteomes" id="UP000000426">
    <property type="component" value="Chromosome"/>
</dbReference>
<dbReference type="GO" id="GO:0005737">
    <property type="term" value="C:cytoplasm"/>
    <property type="evidence" value="ECO:0007669"/>
    <property type="project" value="UniProtKB-SubCell"/>
</dbReference>
<dbReference type="GO" id="GO:0004222">
    <property type="term" value="F:metalloendopeptidase activity"/>
    <property type="evidence" value="ECO:0007669"/>
    <property type="project" value="InterPro"/>
</dbReference>
<dbReference type="GO" id="GO:0004521">
    <property type="term" value="F:RNA endonuclease activity"/>
    <property type="evidence" value="ECO:0007669"/>
    <property type="project" value="UniProtKB-UniRule"/>
</dbReference>
<dbReference type="GO" id="GO:0008270">
    <property type="term" value="F:zinc ion binding"/>
    <property type="evidence" value="ECO:0007669"/>
    <property type="project" value="UniProtKB-UniRule"/>
</dbReference>
<dbReference type="GO" id="GO:0006364">
    <property type="term" value="P:rRNA processing"/>
    <property type="evidence" value="ECO:0007669"/>
    <property type="project" value="UniProtKB-UniRule"/>
</dbReference>
<dbReference type="Gene3D" id="3.40.390.30">
    <property type="entry name" value="Metalloproteases ('zincins'), catalytic domain"/>
    <property type="match status" value="1"/>
</dbReference>
<dbReference type="HAMAP" id="MF_00009">
    <property type="entry name" value="Endoribonucl_YbeY"/>
    <property type="match status" value="1"/>
</dbReference>
<dbReference type="InterPro" id="IPR023091">
    <property type="entry name" value="MetalPrtase_cat_dom_sf_prd"/>
</dbReference>
<dbReference type="InterPro" id="IPR002036">
    <property type="entry name" value="YbeY"/>
</dbReference>
<dbReference type="InterPro" id="IPR020549">
    <property type="entry name" value="YbeY_CS"/>
</dbReference>
<dbReference type="NCBIfam" id="TIGR00043">
    <property type="entry name" value="rRNA maturation RNase YbeY"/>
    <property type="match status" value="1"/>
</dbReference>
<dbReference type="PANTHER" id="PTHR46986">
    <property type="entry name" value="ENDORIBONUCLEASE YBEY, CHLOROPLASTIC"/>
    <property type="match status" value="1"/>
</dbReference>
<dbReference type="PANTHER" id="PTHR46986:SF1">
    <property type="entry name" value="ENDORIBONUCLEASE YBEY, CHLOROPLASTIC"/>
    <property type="match status" value="1"/>
</dbReference>
<dbReference type="Pfam" id="PF02130">
    <property type="entry name" value="YbeY"/>
    <property type="match status" value="1"/>
</dbReference>
<dbReference type="SUPFAM" id="SSF55486">
    <property type="entry name" value="Metalloproteases ('zincins'), catalytic domain"/>
    <property type="match status" value="1"/>
</dbReference>
<dbReference type="PROSITE" id="PS01306">
    <property type="entry name" value="UPF0054"/>
    <property type="match status" value="1"/>
</dbReference>
<feature type="chain" id="PRO_0000284280" description="Endoribonuclease YbeY">
    <location>
        <begin position="1"/>
        <end position="166"/>
    </location>
</feature>
<feature type="region of interest" description="Disordered" evidence="2">
    <location>
        <begin position="140"/>
        <end position="166"/>
    </location>
</feature>
<feature type="compositionally biased region" description="Basic and acidic residues" evidence="2">
    <location>
        <begin position="154"/>
        <end position="166"/>
    </location>
</feature>
<feature type="binding site" evidence="1">
    <location>
        <position position="111"/>
    </location>
    <ligand>
        <name>Zn(2+)</name>
        <dbReference type="ChEBI" id="CHEBI:29105"/>
        <note>catalytic</note>
    </ligand>
</feature>
<feature type="binding site" evidence="1">
    <location>
        <position position="115"/>
    </location>
    <ligand>
        <name>Zn(2+)</name>
        <dbReference type="ChEBI" id="CHEBI:29105"/>
        <note>catalytic</note>
    </ligand>
</feature>
<feature type="binding site" evidence="1">
    <location>
        <position position="121"/>
    </location>
    <ligand>
        <name>Zn(2+)</name>
        <dbReference type="ChEBI" id="CHEBI:29105"/>
        <note>catalytic</note>
    </ligand>
</feature>
<protein>
    <recommendedName>
        <fullName evidence="1">Endoribonuclease YbeY</fullName>
        <ecNumber evidence="1">3.1.-.-</ecNumber>
    </recommendedName>
</protein>
<reference key="1">
    <citation type="journal article" date="2005" name="Proc. Natl. Acad. Sci. U.S.A.">
        <title>Comparison of the complete genome sequences of Pseudomonas syringae pv. syringae B728a and pv. tomato DC3000.</title>
        <authorList>
            <person name="Feil H."/>
            <person name="Feil W.S."/>
            <person name="Chain P."/>
            <person name="Larimer F."/>
            <person name="Dibartolo G."/>
            <person name="Copeland A."/>
            <person name="Lykidis A."/>
            <person name="Trong S."/>
            <person name="Nolan M."/>
            <person name="Goltsman E."/>
            <person name="Thiel J."/>
            <person name="Malfatti S."/>
            <person name="Loper J.E."/>
            <person name="Lapidus A."/>
            <person name="Detter J.C."/>
            <person name="Land M."/>
            <person name="Richardson P.M."/>
            <person name="Kyrpides N.C."/>
            <person name="Ivanova N."/>
            <person name="Lindow S.E."/>
        </authorList>
    </citation>
    <scope>NUCLEOTIDE SEQUENCE [LARGE SCALE GENOMIC DNA]</scope>
    <source>
        <strain>B728a</strain>
    </source>
</reference>
<name>YBEY_PSEU2</name>
<sequence length="166" mass="18772">MLELDLQVASETSAPDEARLRLWCEMGLRQRSADSELTIRLVDETEGRELNNTWRHKNYATNVLSFPADVPDDMLDIPLLGDLVICVPVVNREAVEQGKSVDAHWAHMVIHGCLHLLGYDHIDDEEAEEMEALERTLLEELGYPDPYADDESADPPHSDTPSKDHE</sequence>
<comment type="function">
    <text evidence="1">Single strand-specific metallo-endoribonuclease involved in late-stage 70S ribosome quality control and in maturation of the 3' terminus of the 16S rRNA.</text>
</comment>
<comment type="cofactor">
    <cofactor evidence="1">
        <name>Zn(2+)</name>
        <dbReference type="ChEBI" id="CHEBI:29105"/>
    </cofactor>
    <text evidence="1">Binds 1 zinc ion.</text>
</comment>
<comment type="subcellular location">
    <subcellularLocation>
        <location evidence="1">Cytoplasm</location>
    </subcellularLocation>
</comment>
<comment type="similarity">
    <text evidence="1">Belongs to the endoribonuclease YbeY family.</text>
</comment>
<organism>
    <name type="scientific">Pseudomonas syringae pv. syringae (strain B728a)</name>
    <dbReference type="NCBI Taxonomy" id="205918"/>
    <lineage>
        <taxon>Bacteria</taxon>
        <taxon>Pseudomonadati</taxon>
        <taxon>Pseudomonadota</taxon>
        <taxon>Gammaproteobacteria</taxon>
        <taxon>Pseudomonadales</taxon>
        <taxon>Pseudomonadaceae</taxon>
        <taxon>Pseudomonas</taxon>
        <taxon>Pseudomonas syringae</taxon>
    </lineage>
</organism>
<gene>
    <name evidence="1" type="primary">ybeY</name>
    <name type="ordered locus">Psyr_4347</name>
</gene>
<evidence type="ECO:0000255" key="1">
    <source>
        <dbReference type="HAMAP-Rule" id="MF_00009"/>
    </source>
</evidence>
<evidence type="ECO:0000256" key="2">
    <source>
        <dbReference type="SAM" id="MobiDB-lite"/>
    </source>
</evidence>